<dbReference type="EMBL" id="CP000800">
    <property type="protein sequence ID" value="ABV21189.1"/>
    <property type="molecule type" value="Genomic_DNA"/>
</dbReference>
<dbReference type="RefSeq" id="WP_000135186.1">
    <property type="nucleotide sequence ID" value="NC_009801.1"/>
</dbReference>
<dbReference type="SMR" id="A7ZM70"/>
<dbReference type="KEGG" id="ecw:EcE24377A_1819"/>
<dbReference type="HOGENOM" id="CLU_078181_0_0_6"/>
<dbReference type="Proteomes" id="UP000001122">
    <property type="component" value="Chromosome"/>
</dbReference>
<dbReference type="GO" id="GO:0005737">
    <property type="term" value="C:cytoplasm"/>
    <property type="evidence" value="ECO:0007669"/>
    <property type="project" value="UniProtKB-SubCell"/>
</dbReference>
<dbReference type="GO" id="GO:0003677">
    <property type="term" value="F:DNA binding"/>
    <property type="evidence" value="ECO:0007669"/>
    <property type="project" value="UniProtKB-UniRule"/>
</dbReference>
<dbReference type="GO" id="GO:0006274">
    <property type="term" value="P:DNA replication termination"/>
    <property type="evidence" value="ECO:0007669"/>
    <property type="project" value="UniProtKB-UniRule"/>
</dbReference>
<dbReference type="Gene3D" id="3.30.54.10">
    <property type="match status" value="1"/>
</dbReference>
<dbReference type="Gene3D" id="3.50.14.10">
    <property type="entry name" value="Replication terminator Tus, domain 1 superfamily/Replication terminator Tus"/>
    <property type="match status" value="1"/>
</dbReference>
<dbReference type="HAMAP" id="MF_00483">
    <property type="entry name" value="Rep_term_Tus"/>
    <property type="match status" value="1"/>
</dbReference>
<dbReference type="InterPro" id="IPR008865">
    <property type="entry name" value="DNA_replication_term_site-bd"/>
</dbReference>
<dbReference type="InterPro" id="IPR036381">
    <property type="entry name" value="Tus_dom1"/>
</dbReference>
<dbReference type="InterPro" id="IPR036384">
    <property type="entry name" value="Tus_sf"/>
</dbReference>
<dbReference type="NCBIfam" id="TIGR02648">
    <property type="entry name" value="rep_term_tus"/>
    <property type="match status" value="1"/>
</dbReference>
<dbReference type="Pfam" id="PF05472">
    <property type="entry name" value="Ter"/>
    <property type="match status" value="1"/>
</dbReference>
<dbReference type="SUPFAM" id="SSF56596">
    <property type="entry name" value="Replication terminator protein (Tus)"/>
    <property type="match status" value="1"/>
</dbReference>
<feature type="chain" id="PRO_1000060425" description="DNA replication terminus site-binding protein">
    <location>
        <begin position="1"/>
        <end position="309"/>
    </location>
</feature>
<proteinExistence type="inferred from homology"/>
<evidence type="ECO:0000255" key="1">
    <source>
        <dbReference type="HAMAP-Rule" id="MF_00483"/>
    </source>
</evidence>
<gene>
    <name evidence="1" type="primary">tus</name>
    <name type="ordered locus">EcE24377A_1819</name>
</gene>
<sequence length="309" mass="35771">MARYDLVDRLNTTFRQMEQELATFAAHLEQHKLLVARVFSLPEVKKEDEHNPLNRIEVKQHLGNDAQSLALRHFRHLFIQQQSENRSSKAAVRLPGVLCYQVDNLSQAALVSHIQHINKLKTTFEHIVTVESELPTAARFEWVHRHLPGLITLNAYRTLTVLHDPATLRFGWANKHIIKNLHRDEVLAQLEKSLKSPRSVAPWTREEWQRKLEREYQDIAALPQNAKLKIKRPVKVQPIARVWYKGDQKQVQHACPTPLIALINRDNGAGVPDVGELLNYDADNVQHRYKPQAQPLRLIIPRLHLYVAD</sequence>
<protein>
    <recommendedName>
        <fullName evidence="1">DNA replication terminus site-binding protein</fullName>
        <shortName evidence="1">Ter-binding protein</shortName>
    </recommendedName>
</protein>
<comment type="function">
    <text evidence="1">Trans-acting protein required for termination of DNA replication. Binds to DNA replication terminator sequences (terA to terF) to prevent the passage of replication forks. The termination efficiency will be affected by the affinity of this protein for the terminator sequence.</text>
</comment>
<comment type="subcellular location">
    <subcellularLocation>
        <location evidence="1">Cytoplasm</location>
    </subcellularLocation>
</comment>
<comment type="similarity">
    <text evidence="1">Belongs to the Tus family.</text>
</comment>
<reference key="1">
    <citation type="journal article" date="2008" name="J. Bacteriol.">
        <title>The pangenome structure of Escherichia coli: comparative genomic analysis of E. coli commensal and pathogenic isolates.</title>
        <authorList>
            <person name="Rasko D.A."/>
            <person name="Rosovitz M.J."/>
            <person name="Myers G.S.A."/>
            <person name="Mongodin E.F."/>
            <person name="Fricke W.F."/>
            <person name="Gajer P."/>
            <person name="Crabtree J."/>
            <person name="Sebaihia M."/>
            <person name="Thomson N.R."/>
            <person name="Chaudhuri R."/>
            <person name="Henderson I.R."/>
            <person name="Sperandio V."/>
            <person name="Ravel J."/>
        </authorList>
    </citation>
    <scope>NUCLEOTIDE SEQUENCE [LARGE SCALE GENOMIC DNA]</scope>
    <source>
        <strain>E24377A / ETEC</strain>
    </source>
</reference>
<accession>A7ZM70</accession>
<keyword id="KW-0963">Cytoplasm</keyword>
<keyword id="KW-0235">DNA replication</keyword>
<keyword id="KW-0238">DNA-binding</keyword>
<keyword id="KW-1185">Reference proteome</keyword>
<name>TUS_ECO24</name>
<organism>
    <name type="scientific">Escherichia coli O139:H28 (strain E24377A / ETEC)</name>
    <dbReference type="NCBI Taxonomy" id="331111"/>
    <lineage>
        <taxon>Bacteria</taxon>
        <taxon>Pseudomonadati</taxon>
        <taxon>Pseudomonadota</taxon>
        <taxon>Gammaproteobacteria</taxon>
        <taxon>Enterobacterales</taxon>
        <taxon>Enterobacteriaceae</taxon>
        <taxon>Escherichia</taxon>
    </lineage>
</organism>